<feature type="chain" id="PRO_1000003108" description="Ribosome-recycling factor">
    <location>
        <begin position="1"/>
        <end position="184"/>
    </location>
</feature>
<comment type="function">
    <text evidence="1">Responsible for the release of ribosomes from messenger RNA at the termination of protein biosynthesis. May increase the efficiency of translation by recycling ribosomes from one round of translation to another.</text>
</comment>
<comment type="subcellular location">
    <subcellularLocation>
        <location evidence="1">Cytoplasm</location>
    </subcellularLocation>
</comment>
<comment type="similarity">
    <text evidence="1">Belongs to the RRF family.</text>
</comment>
<accession>A1A1I2</accession>
<gene>
    <name evidence="1" type="primary">frr</name>
    <name type="ordered locus">BAD_0784</name>
</gene>
<proteinExistence type="inferred from homology"/>
<evidence type="ECO:0000255" key="1">
    <source>
        <dbReference type="HAMAP-Rule" id="MF_00040"/>
    </source>
</evidence>
<name>RRF_BIFAA</name>
<keyword id="KW-0963">Cytoplasm</keyword>
<keyword id="KW-0648">Protein biosynthesis</keyword>
<keyword id="KW-1185">Reference proteome</keyword>
<reference key="1">
    <citation type="submission" date="2006-12" db="EMBL/GenBank/DDBJ databases">
        <title>Bifidobacterium adolescentis complete genome sequence.</title>
        <authorList>
            <person name="Suzuki T."/>
            <person name="Tsuda Y."/>
            <person name="Kanou N."/>
            <person name="Inoue T."/>
            <person name="Kumazaki K."/>
            <person name="Nagano S."/>
            <person name="Hirai S."/>
            <person name="Tanaka K."/>
            <person name="Watanabe K."/>
        </authorList>
    </citation>
    <scope>NUCLEOTIDE SEQUENCE [LARGE SCALE GENOMIC DNA]</scope>
    <source>
        <strain>ATCC 15703 / DSM 20083 / NCTC 11814 / E194a</strain>
    </source>
</reference>
<protein>
    <recommendedName>
        <fullName evidence="1">Ribosome-recycling factor</fullName>
        <shortName evidence="1">RRF</shortName>
    </recommendedName>
    <alternativeName>
        <fullName evidence="1">Ribosome-releasing factor</fullName>
    </alternativeName>
</protein>
<organism>
    <name type="scientific">Bifidobacterium adolescentis (strain ATCC 15703 / DSM 20083 / NCTC 11814 / E194a)</name>
    <dbReference type="NCBI Taxonomy" id="367928"/>
    <lineage>
        <taxon>Bacteria</taxon>
        <taxon>Bacillati</taxon>
        <taxon>Actinomycetota</taxon>
        <taxon>Actinomycetes</taxon>
        <taxon>Bifidobacteriales</taxon>
        <taxon>Bifidobacteriaceae</taxon>
        <taxon>Bifidobacterium</taxon>
    </lineage>
</organism>
<sequence>MATIVDQAKAQMAKSVESTKENFSGIRTGRANPALLNGITVDYYGAPTPLKAVATIGVPEPRTLAVTPFDASQANAVEKALRDSDLGASPRRDGNVIRLTMPELTEERRKEYVKIAKGKAEDGKVAVRNIRRKAKESLDKAIKDGDMGEDEGDRLLKELDKVTKQTTDELDALLETKQKEIMEV</sequence>
<dbReference type="EMBL" id="AP009256">
    <property type="protein sequence ID" value="BAF39565.1"/>
    <property type="molecule type" value="Genomic_DNA"/>
</dbReference>
<dbReference type="RefSeq" id="WP_003809323.1">
    <property type="nucleotide sequence ID" value="NZ_CAXVNC010000004.1"/>
</dbReference>
<dbReference type="SMR" id="A1A1I2"/>
<dbReference type="STRING" id="367928.BAD_0784"/>
<dbReference type="PaxDb" id="1680-BADO_0833"/>
<dbReference type="GeneID" id="4556977"/>
<dbReference type="KEGG" id="bad:BAD_0784"/>
<dbReference type="HOGENOM" id="CLU_073981_2_0_11"/>
<dbReference type="Proteomes" id="UP000008702">
    <property type="component" value="Chromosome"/>
</dbReference>
<dbReference type="GO" id="GO:0005737">
    <property type="term" value="C:cytoplasm"/>
    <property type="evidence" value="ECO:0007669"/>
    <property type="project" value="UniProtKB-SubCell"/>
</dbReference>
<dbReference type="GO" id="GO:0043023">
    <property type="term" value="F:ribosomal large subunit binding"/>
    <property type="evidence" value="ECO:0007669"/>
    <property type="project" value="TreeGrafter"/>
</dbReference>
<dbReference type="GO" id="GO:0006415">
    <property type="term" value="P:translational termination"/>
    <property type="evidence" value="ECO:0007669"/>
    <property type="project" value="UniProtKB-UniRule"/>
</dbReference>
<dbReference type="CDD" id="cd00520">
    <property type="entry name" value="RRF"/>
    <property type="match status" value="1"/>
</dbReference>
<dbReference type="FunFam" id="1.10.132.20:FF:000001">
    <property type="entry name" value="Ribosome-recycling factor"/>
    <property type="match status" value="1"/>
</dbReference>
<dbReference type="FunFam" id="3.30.1360.40:FF:000001">
    <property type="entry name" value="Ribosome-recycling factor"/>
    <property type="match status" value="1"/>
</dbReference>
<dbReference type="Gene3D" id="3.30.1360.40">
    <property type="match status" value="1"/>
</dbReference>
<dbReference type="Gene3D" id="1.10.132.20">
    <property type="entry name" value="Ribosome-recycling factor"/>
    <property type="match status" value="1"/>
</dbReference>
<dbReference type="HAMAP" id="MF_00040">
    <property type="entry name" value="RRF"/>
    <property type="match status" value="1"/>
</dbReference>
<dbReference type="InterPro" id="IPR002661">
    <property type="entry name" value="Ribosome_recyc_fac"/>
</dbReference>
<dbReference type="InterPro" id="IPR023584">
    <property type="entry name" value="Ribosome_recyc_fac_dom"/>
</dbReference>
<dbReference type="InterPro" id="IPR036191">
    <property type="entry name" value="RRF_sf"/>
</dbReference>
<dbReference type="NCBIfam" id="TIGR00496">
    <property type="entry name" value="frr"/>
    <property type="match status" value="1"/>
</dbReference>
<dbReference type="PANTHER" id="PTHR20982:SF3">
    <property type="entry name" value="MITOCHONDRIAL RIBOSOME RECYCLING FACTOR PSEUDO 1"/>
    <property type="match status" value="1"/>
</dbReference>
<dbReference type="PANTHER" id="PTHR20982">
    <property type="entry name" value="RIBOSOME RECYCLING FACTOR"/>
    <property type="match status" value="1"/>
</dbReference>
<dbReference type="Pfam" id="PF01765">
    <property type="entry name" value="RRF"/>
    <property type="match status" value="1"/>
</dbReference>
<dbReference type="SUPFAM" id="SSF55194">
    <property type="entry name" value="Ribosome recycling factor, RRF"/>
    <property type="match status" value="1"/>
</dbReference>